<gene>
    <name evidence="8" type="primary">Aqp5</name>
</gene>
<comment type="function">
    <text evidence="2 4 5">Aquaporins form homotetrameric transmembrane channels, with each monomer independently mediating water transport across the plasma membrane along its osmotic gradient (PubMed:7530250, PubMed:8621489). Plays an important role in fluid secretion in salivary glands. Required for TRPV4 activation by hypotonicity. Together with TRPV4, controls regulatory volume decrease in salivary epithelial cells. Seems to play a redundant role in water transport in the eye, lung and in sweat glands (By similarity).</text>
</comment>
<comment type="catalytic activity">
    <reaction evidence="4 5">
        <text>H2O(in) = H2O(out)</text>
        <dbReference type="Rhea" id="RHEA:29667"/>
        <dbReference type="ChEBI" id="CHEBI:15377"/>
    </reaction>
</comment>
<comment type="subunit">
    <text evidence="1">Homotetramer; each monomer provides an independent water pore. Interacts with TRPV4; the interaction is probably indirect and regulates TRPV4 activation by hypotonicity.</text>
</comment>
<comment type="subcellular location">
    <subcellularLocation>
        <location evidence="2">Apical cell membrane</location>
        <topology evidence="1">Multi-pass membrane protein</topology>
    </subcellularLocation>
    <subcellularLocation>
        <location evidence="4">Cell membrane</location>
        <topology evidence="1">Multi-pass membrane protein</topology>
    </subcellularLocation>
    <subcellularLocation>
        <location evidence="1">Cytoplasmic vesicle membrane</location>
        <topology evidence="1">Multi-pass membrane protein</topology>
    </subcellularLocation>
    <text evidence="1">Hypotonicity increases location at the cell membrane. Phosphorylation decreases location at the cell membrane.</text>
</comment>
<comment type="tissue specificity">
    <text evidence="4">Salivary glands, lacrimal glands, corneal epithelium in eye, trachea and lung.</text>
</comment>
<comment type="domain">
    <text evidence="1">Aquaporins contain two tandem repeats each containing three membrane-spanning domains and a pore-forming loop with the signature motif Asn-Pro-Ala (NPA).</text>
</comment>
<comment type="similarity">
    <text evidence="7">Belongs to the MIP/aquaporin (TC 1.A.8) family.</text>
</comment>
<reference key="1">
    <citation type="journal article" date="1995" name="J. Biol. Chem.">
        <title>Molecular cloning and characterization of an aquaporin cDNA from salivary, lacrimal, and respiratory tissues.</title>
        <authorList>
            <person name="Raina S."/>
            <person name="Preston G.M."/>
            <person name="Guggino W.B."/>
            <person name="Agre P."/>
        </authorList>
    </citation>
    <scope>NUCLEOTIDE SEQUENCE [MRNA]</scope>
    <scope>FUNCTION</scope>
    <scope>TRANSPORTER ACTIVITY</scope>
    <scope>SUBCELLULAR LOCATION</scope>
    <scope>TISSUE SPECIFICITY</scope>
    <source>
        <tissue>Submandibular gland</tissue>
    </source>
</reference>
<reference key="2">
    <citation type="journal article" date="2004" name="Genome Res.">
        <title>The status, quality, and expansion of the NIH full-length cDNA project: the Mammalian Gene Collection (MGC).</title>
        <authorList>
            <consortium name="The MGC Project Team"/>
        </authorList>
    </citation>
    <scope>NUCLEOTIDE SEQUENCE [LARGE SCALE MRNA]</scope>
    <source>
        <tissue>Lung</tissue>
    </source>
</reference>
<reference key="3">
    <citation type="journal article" date="1996" name="J. Biol. Chem.">
        <title>The human aquaporin-5 gene. Molecular characterization and chromosomal localization.</title>
        <authorList>
            <person name="Lee M.D."/>
            <person name="Bhakta K.Y."/>
            <person name="Raina S."/>
            <person name="Yonescu R."/>
            <person name="Griffin C.A."/>
            <person name="Copeland N.G."/>
            <person name="Gilbert D.J."/>
            <person name="Jenkins N.A."/>
            <person name="Preston G.M."/>
            <person name="Agre P."/>
        </authorList>
    </citation>
    <scope>TRANSPORTER ACTIVITY</scope>
</reference>
<name>AQP5_RAT</name>
<feature type="chain" id="PRO_0000063953" description="Aquaporin-5">
    <location>
        <begin position="1"/>
        <end position="265"/>
    </location>
</feature>
<feature type="topological domain" description="Cytoplasmic" evidence="7">
    <location>
        <begin position="1"/>
        <end position="12"/>
    </location>
</feature>
<feature type="transmembrane region" description="Helical" evidence="1">
    <location>
        <begin position="13"/>
        <end position="33"/>
    </location>
</feature>
<feature type="topological domain" description="Extracellular" evidence="7">
    <location>
        <begin position="34"/>
        <end position="39"/>
    </location>
</feature>
<feature type="transmembrane region" description="Helical" evidence="1">
    <location>
        <begin position="40"/>
        <end position="60"/>
    </location>
</feature>
<feature type="topological domain" description="Cytoplasmic" evidence="7">
    <location>
        <begin position="61"/>
        <end position="65"/>
    </location>
</feature>
<feature type="intramembrane region" description="Discontinuously helical" evidence="1">
    <location>
        <begin position="66"/>
        <end position="74"/>
    </location>
</feature>
<feature type="topological domain" description="Cytoplasmic" evidence="7">
    <location>
        <begin position="75"/>
        <end position="87"/>
    </location>
</feature>
<feature type="transmembrane region" description="Helical" evidence="1">
    <location>
        <begin position="88"/>
        <end position="108"/>
    </location>
</feature>
<feature type="topological domain" description="Extracellular" evidence="7">
    <location>
        <begin position="109"/>
        <end position="126"/>
    </location>
</feature>
<feature type="transmembrane region" description="Helical" evidence="1">
    <location>
        <begin position="127"/>
        <end position="147"/>
    </location>
</feature>
<feature type="topological domain" description="Cytoplasmic" evidence="7">
    <location>
        <begin position="148"/>
        <end position="158"/>
    </location>
</feature>
<feature type="transmembrane region" description="Helical" evidence="1">
    <location>
        <begin position="159"/>
        <end position="179"/>
    </location>
</feature>
<feature type="topological domain" description="Extracellular" evidence="7">
    <location>
        <position position="180"/>
    </location>
</feature>
<feature type="intramembrane region" description="Discontinuously helical" evidence="1">
    <location>
        <begin position="181"/>
        <end position="191"/>
    </location>
</feature>
<feature type="topological domain" description="Extracellular" evidence="7">
    <location>
        <begin position="192"/>
        <end position="203"/>
    </location>
</feature>
<feature type="transmembrane region" description="Helical" evidence="1">
    <location>
        <begin position="204"/>
        <end position="224"/>
    </location>
</feature>
<feature type="topological domain" description="Cytoplasmic" evidence="7">
    <location>
        <begin position="225"/>
        <end position="265"/>
    </location>
</feature>
<feature type="short sequence motif" description="NPA 1" evidence="1">
    <location>
        <begin position="69"/>
        <end position="71"/>
    </location>
</feature>
<feature type="short sequence motif" description="NPA 2" evidence="1">
    <location>
        <begin position="185"/>
        <end position="187"/>
    </location>
</feature>
<feature type="glycosylation site" description="N-linked (GlcNAc...) asparagine" evidence="3">
    <location>
        <position position="124"/>
    </location>
</feature>
<proteinExistence type="evidence at transcript level"/>
<evidence type="ECO:0000250" key="1">
    <source>
        <dbReference type="UniProtKB" id="P55064"/>
    </source>
</evidence>
<evidence type="ECO:0000250" key="2">
    <source>
        <dbReference type="UniProtKB" id="Q9WTY4"/>
    </source>
</evidence>
<evidence type="ECO:0000255" key="3"/>
<evidence type="ECO:0000269" key="4">
    <source>
    </source>
</evidence>
<evidence type="ECO:0000269" key="5">
    <source>
    </source>
</evidence>
<evidence type="ECO:0000303" key="6">
    <source>
    </source>
</evidence>
<evidence type="ECO:0000305" key="7"/>
<evidence type="ECO:0000312" key="8">
    <source>
        <dbReference type="RGD" id="2144"/>
    </source>
</evidence>
<keyword id="KW-1003">Cell membrane</keyword>
<keyword id="KW-0968">Cytoplasmic vesicle</keyword>
<keyword id="KW-0325">Glycoprotein</keyword>
<keyword id="KW-0472">Membrane</keyword>
<keyword id="KW-1185">Reference proteome</keyword>
<keyword id="KW-0677">Repeat</keyword>
<keyword id="KW-0812">Transmembrane</keyword>
<keyword id="KW-1133">Transmembrane helix</keyword>
<keyword id="KW-0813">Transport</keyword>
<sequence>MKKEVCSLAFFKAVFAEFLATLIFVFFGLGSALKWPSALPTILQISIAFGLAIGTLAQALGPVSGGHINPAITLALLIGNQISLLRAVFYVAAQLVGAIAGAGILYWLAPLNARGNLAVNALNNNTTPGKAMVVELILTFQLALCIFSSTDSRRTSPVGSPALSIGLSVTLGHLVGIYFTGCSMNPARSFGPAVVMNRFSPSHWVFWVGPIVGAMLAAILYFYLLFPSSLSLHDRVAVVKGTYEPEEDWEDHREERKKTIELTAH</sequence>
<organism>
    <name type="scientific">Rattus norvegicus</name>
    <name type="common">Rat</name>
    <dbReference type="NCBI Taxonomy" id="10116"/>
    <lineage>
        <taxon>Eukaryota</taxon>
        <taxon>Metazoa</taxon>
        <taxon>Chordata</taxon>
        <taxon>Craniata</taxon>
        <taxon>Vertebrata</taxon>
        <taxon>Euteleostomi</taxon>
        <taxon>Mammalia</taxon>
        <taxon>Eutheria</taxon>
        <taxon>Euarchontoglires</taxon>
        <taxon>Glires</taxon>
        <taxon>Rodentia</taxon>
        <taxon>Myomorpha</taxon>
        <taxon>Muroidea</taxon>
        <taxon>Muridae</taxon>
        <taxon>Murinae</taxon>
        <taxon>Rattus</taxon>
    </lineage>
</organism>
<accession>P47864</accession>
<accession>Q2YDV0</accession>
<accession>Q569C5</accession>
<dbReference type="EMBL" id="U16245">
    <property type="protein sequence ID" value="AAA66221.1"/>
    <property type="molecule type" value="mRNA"/>
</dbReference>
<dbReference type="EMBL" id="BC092572">
    <property type="protein sequence ID" value="AAH92572.2"/>
    <property type="molecule type" value="mRNA"/>
</dbReference>
<dbReference type="EMBL" id="BC110045">
    <property type="protein sequence ID" value="AAI10046.1"/>
    <property type="molecule type" value="mRNA"/>
</dbReference>
<dbReference type="PIR" id="A55630">
    <property type="entry name" value="A55630"/>
</dbReference>
<dbReference type="RefSeq" id="NP_036911.1">
    <property type="nucleotide sequence ID" value="NM_012779.2"/>
</dbReference>
<dbReference type="SMR" id="P47864"/>
<dbReference type="FunCoup" id="P47864">
    <property type="interactions" value="31"/>
</dbReference>
<dbReference type="STRING" id="10116.ENSRNOP00000073596"/>
<dbReference type="GlyCosmos" id="P47864">
    <property type="glycosylation" value="1 site, No reported glycans"/>
</dbReference>
<dbReference type="GlyGen" id="P47864">
    <property type="glycosylation" value="1 site"/>
</dbReference>
<dbReference type="iPTMnet" id="P47864"/>
<dbReference type="PhosphoSitePlus" id="P47864"/>
<dbReference type="PaxDb" id="10116-ENSRNOP00000024102"/>
<dbReference type="GeneID" id="25241"/>
<dbReference type="KEGG" id="rno:25241"/>
<dbReference type="UCSC" id="RGD:2144">
    <property type="organism name" value="rat"/>
</dbReference>
<dbReference type="AGR" id="RGD:2144"/>
<dbReference type="CTD" id="362"/>
<dbReference type="RGD" id="2144">
    <property type="gene designation" value="Aqp5"/>
</dbReference>
<dbReference type="VEuPathDB" id="HostDB:ENSRNOG00000051970"/>
<dbReference type="eggNOG" id="KOG0223">
    <property type="taxonomic scope" value="Eukaryota"/>
</dbReference>
<dbReference type="HOGENOM" id="CLU_020019_3_3_1"/>
<dbReference type="InParanoid" id="P47864"/>
<dbReference type="OrthoDB" id="74573at9989"/>
<dbReference type="TreeFam" id="TF312940"/>
<dbReference type="Reactome" id="R-RNO-432047">
    <property type="pathway name" value="Passive transport by Aquaporins"/>
</dbReference>
<dbReference type="PRO" id="PR:P47864"/>
<dbReference type="Proteomes" id="UP000002494">
    <property type="component" value="Chromosome 7"/>
</dbReference>
<dbReference type="Bgee" id="ENSRNOG00000051970">
    <property type="expression patterns" value="Expressed in lung and 7 other cell types or tissues"/>
</dbReference>
<dbReference type="GO" id="GO:0016324">
    <property type="term" value="C:apical plasma membrane"/>
    <property type="evidence" value="ECO:0000314"/>
    <property type="project" value="RGD"/>
</dbReference>
<dbReference type="GO" id="GO:0009925">
    <property type="term" value="C:basal plasma membrane"/>
    <property type="evidence" value="ECO:0000266"/>
    <property type="project" value="RGD"/>
</dbReference>
<dbReference type="GO" id="GO:0030659">
    <property type="term" value="C:cytoplasmic vesicle membrane"/>
    <property type="evidence" value="ECO:0000250"/>
    <property type="project" value="UniProtKB"/>
</dbReference>
<dbReference type="GO" id="GO:0005783">
    <property type="term" value="C:endoplasmic reticulum"/>
    <property type="evidence" value="ECO:0000266"/>
    <property type="project" value="RGD"/>
</dbReference>
<dbReference type="GO" id="GO:0005902">
    <property type="term" value="C:microvillus"/>
    <property type="evidence" value="ECO:0000266"/>
    <property type="project" value="RGD"/>
</dbReference>
<dbReference type="GO" id="GO:0005886">
    <property type="term" value="C:plasma membrane"/>
    <property type="evidence" value="ECO:0000250"/>
    <property type="project" value="UniProtKB"/>
</dbReference>
<dbReference type="GO" id="GO:0042802">
    <property type="term" value="F:identical protein binding"/>
    <property type="evidence" value="ECO:0000266"/>
    <property type="project" value="RGD"/>
</dbReference>
<dbReference type="GO" id="GO:0015250">
    <property type="term" value="F:water channel activity"/>
    <property type="evidence" value="ECO:0000314"/>
    <property type="project" value="UniProtKB"/>
</dbReference>
<dbReference type="GO" id="GO:0048593">
    <property type="term" value="P:camera-type eye morphogenesis"/>
    <property type="evidence" value="ECO:0000266"/>
    <property type="project" value="RGD"/>
</dbReference>
<dbReference type="GO" id="GO:0015670">
    <property type="term" value="P:carbon dioxide transport"/>
    <property type="evidence" value="ECO:0000314"/>
    <property type="project" value="UniProtKB"/>
</dbReference>
<dbReference type="GO" id="GO:0071476">
    <property type="term" value="P:cellular hypotonic response"/>
    <property type="evidence" value="ECO:0000250"/>
    <property type="project" value="UniProtKB"/>
</dbReference>
<dbReference type="GO" id="GO:0042476">
    <property type="term" value="P:odontogenesis"/>
    <property type="evidence" value="ECO:0000266"/>
    <property type="project" value="RGD"/>
</dbReference>
<dbReference type="GO" id="GO:0030157">
    <property type="term" value="P:pancreatic juice secretion"/>
    <property type="evidence" value="ECO:0000266"/>
    <property type="project" value="RGD"/>
</dbReference>
<dbReference type="GO" id="GO:0051289">
    <property type="term" value="P:protein homotetramerization"/>
    <property type="evidence" value="ECO:0000250"/>
    <property type="project" value="UniProtKB"/>
</dbReference>
<dbReference type="GO" id="GO:0046541">
    <property type="term" value="P:saliva secretion"/>
    <property type="evidence" value="ECO:0000266"/>
    <property type="project" value="RGD"/>
</dbReference>
<dbReference type="GO" id="GO:0006833">
    <property type="term" value="P:water transport"/>
    <property type="evidence" value="ECO:0000250"/>
    <property type="project" value="UniProtKB"/>
</dbReference>
<dbReference type="CDD" id="cd00333">
    <property type="entry name" value="MIP"/>
    <property type="match status" value="1"/>
</dbReference>
<dbReference type="FunFam" id="1.20.1080.10:FF:000003">
    <property type="entry name" value="Lens fiber major intrinsic"/>
    <property type="match status" value="1"/>
</dbReference>
<dbReference type="Gene3D" id="1.20.1080.10">
    <property type="entry name" value="Glycerol uptake facilitator protein"/>
    <property type="match status" value="1"/>
</dbReference>
<dbReference type="InterPro" id="IPR023271">
    <property type="entry name" value="Aquaporin-like"/>
</dbReference>
<dbReference type="InterPro" id="IPR023276">
    <property type="entry name" value="Aquaporin_5"/>
</dbReference>
<dbReference type="InterPro" id="IPR034294">
    <property type="entry name" value="Aquaporin_transptr"/>
</dbReference>
<dbReference type="InterPro" id="IPR000425">
    <property type="entry name" value="MIP"/>
</dbReference>
<dbReference type="InterPro" id="IPR022357">
    <property type="entry name" value="MIP_CS"/>
</dbReference>
<dbReference type="NCBIfam" id="TIGR00861">
    <property type="entry name" value="MIP"/>
    <property type="match status" value="1"/>
</dbReference>
<dbReference type="PANTHER" id="PTHR19139">
    <property type="entry name" value="AQUAPORIN TRANSPORTER"/>
    <property type="match status" value="1"/>
</dbReference>
<dbReference type="PANTHER" id="PTHR19139:SF38">
    <property type="entry name" value="AQUAPORIN-5"/>
    <property type="match status" value="1"/>
</dbReference>
<dbReference type="Pfam" id="PF00230">
    <property type="entry name" value="MIP"/>
    <property type="match status" value="1"/>
</dbReference>
<dbReference type="PRINTS" id="PR02017">
    <property type="entry name" value="AQUAPORIN5"/>
</dbReference>
<dbReference type="PRINTS" id="PR00783">
    <property type="entry name" value="MINTRINSICP"/>
</dbReference>
<dbReference type="SUPFAM" id="SSF81338">
    <property type="entry name" value="Aquaporin-like"/>
    <property type="match status" value="1"/>
</dbReference>
<dbReference type="PROSITE" id="PS00221">
    <property type="entry name" value="MIP"/>
    <property type="match status" value="1"/>
</dbReference>
<protein>
    <recommendedName>
        <fullName evidence="6">Aquaporin-5</fullName>
        <shortName>AQP-5</shortName>
    </recommendedName>
</protein>